<evidence type="ECO:0000255" key="1"/>
<evidence type="ECO:0000255" key="2">
    <source>
        <dbReference type="PROSITE-ProRule" id="PRU00102"/>
    </source>
</evidence>
<evidence type="ECO:0000269" key="3">
    <source>
    </source>
</evidence>
<evidence type="ECO:0000305" key="4"/>
<evidence type="ECO:0000305" key="5">
    <source>
    </source>
</evidence>
<feature type="chain" id="PRO_0000428856" description="Probable sensory rhodopsin transducer">
    <location>
        <begin position="1"/>
        <end position="184"/>
    </location>
</feature>
<feature type="transmembrane region" description="Helical" evidence="1">
    <location>
        <begin position="14"/>
        <end position="34"/>
    </location>
</feature>
<feature type="transmembrane region" description="Helical" evidence="1">
    <location>
        <begin position="52"/>
        <end position="72"/>
    </location>
</feature>
<feature type="domain" description="HAMP" evidence="2">
    <location>
        <begin position="73"/>
        <end position="125"/>
    </location>
</feature>
<protein>
    <recommendedName>
        <fullName>Probable sensory rhodopsin transducer</fullName>
        <shortName>HmHtrM</shortName>
    </recommendedName>
</protein>
<accession>Q5V4H8</accession>
<proteinExistence type="evidence at protein level"/>
<keyword id="KW-0472">Membrane</keyword>
<keyword id="KW-1185">Reference proteome</keyword>
<keyword id="KW-0807">Transducer</keyword>
<keyword id="KW-0812">Transmembrane</keyword>
<keyword id="KW-1133">Transmembrane helix</keyword>
<dbReference type="EMBL" id="AY596297">
    <property type="protein sequence ID" value="AAV45574.1"/>
    <property type="molecule type" value="Genomic_DNA"/>
</dbReference>
<dbReference type="SMR" id="Q5V4H8"/>
<dbReference type="STRING" id="272569.rrnAC0558"/>
<dbReference type="PaxDb" id="272569-rrnAC0558"/>
<dbReference type="EnsemblBacteria" id="AAV45574">
    <property type="protein sequence ID" value="AAV45574"/>
    <property type="gene ID" value="rrnAC0558"/>
</dbReference>
<dbReference type="KEGG" id="hma:rrnAC0558"/>
<dbReference type="PATRIC" id="fig|272569.17.peg.1322"/>
<dbReference type="eggNOG" id="arCOG02320">
    <property type="taxonomic scope" value="Archaea"/>
</dbReference>
<dbReference type="HOGENOM" id="CLU_1465058_0_0_2"/>
<dbReference type="Proteomes" id="UP000001169">
    <property type="component" value="Chromosome I"/>
</dbReference>
<dbReference type="GO" id="GO:0016020">
    <property type="term" value="C:membrane"/>
    <property type="evidence" value="ECO:0007669"/>
    <property type="project" value="UniProtKB-SubCell"/>
</dbReference>
<dbReference type="GO" id="GO:0007165">
    <property type="term" value="P:signal transduction"/>
    <property type="evidence" value="ECO:0007669"/>
    <property type="project" value="UniProtKB-KW"/>
</dbReference>
<dbReference type="Gene3D" id="6.10.340.10">
    <property type="match status" value="1"/>
</dbReference>
<dbReference type="InterPro" id="IPR003660">
    <property type="entry name" value="HAMP_dom"/>
</dbReference>
<dbReference type="Pfam" id="PF00672">
    <property type="entry name" value="HAMP"/>
    <property type="match status" value="1"/>
</dbReference>
<dbReference type="SUPFAM" id="SSF158472">
    <property type="entry name" value="HAMP domain-like"/>
    <property type="match status" value="1"/>
</dbReference>
<dbReference type="PROSITE" id="PS50885">
    <property type="entry name" value="HAMP"/>
    <property type="match status" value="1"/>
</dbReference>
<name>HTRM_HALMA</name>
<organism>
    <name type="scientific">Haloarcula marismortui (strain ATCC 43049 / DSM 3752 / JCM 8966 / VKM B-1809)</name>
    <name type="common">Halobacterium marismortui</name>
    <dbReference type="NCBI Taxonomy" id="272569"/>
    <lineage>
        <taxon>Archaea</taxon>
        <taxon>Methanobacteriati</taxon>
        <taxon>Methanobacteriota</taxon>
        <taxon>Stenosarchaea group</taxon>
        <taxon>Halobacteria</taxon>
        <taxon>Halobacteriales</taxon>
        <taxon>Haloarculaceae</taxon>
        <taxon>Haloarcula</taxon>
    </lineage>
</organism>
<comment type="function">
    <text evidence="3">The HtrM-Xop2/SRM complex may interact with CheB or CheR and modulate their availability to Sop1 or Sop2.</text>
</comment>
<comment type="subunit">
    <text evidence="3">Interacts with Xop2/SRM.</text>
</comment>
<comment type="subcellular location">
    <subcellularLocation>
        <location evidence="4">Membrane</location>
        <topology evidence="4">Multi-pass membrane protein</topology>
    </subcellularLocation>
</comment>
<comment type="induction">
    <text evidence="3">Expressed constitutively throughout the growth phases, both in presence and absence of white light.</text>
</comment>
<comment type="miscellaneous">
    <text evidence="5">Is lacking a methyl-accepting transducer domain found in all other photosensory transducers.</text>
</comment>
<comment type="similarity">
    <text evidence="4">Belongs to the methyl-accepting chemotaxis (MCP) protein family.</text>
</comment>
<gene>
    <name type="primary">htrM</name>
    <name type="ordered locus">rrnAC0558</name>
</gene>
<reference key="1">
    <citation type="journal article" date="2004" name="Genome Res.">
        <title>Genome sequence of Haloarcula marismortui: a halophilic archaeon from the Dead Sea.</title>
        <authorList>
            <person name="Baliga N.S."/>
            <person name="Bonneau R."/>
            <person name="Facciotti M.T."/>
            <person name="Pan M."/>
            <person name="Glusman G."/>
            <person name="Deutsch E.W."/>
            <person name="Shannon P."/>
            <person name="Chiu Y."/>
            <person name="Weng R.S."/>
            <person name="Gan R.R."/>
            <person name="Hung P."/>
            <person name="Date S.V."/>
            <person name="Marcotte E."/>
            <person name="Hood L."/>
            <person name="Ng W.V."/>
        </authorList>
    </citation>
    <scope>NUCLEOTIDE SEQUENCE [LARGE SCALE GENOMIC DNA]</scope>
    <source>
        <strain>ATCC 43049 / DSM 3752 / JCM 8966 / VKM B-1809</strain>
    </source>
</reference>
<reference key="2">
    <citation type="journal article" date="2010" name="J. Bacteriol.">
        <title>A novel six-rhodopsin system in a single archaeon.</title>
        <authorList>
            <person name="Fu H.Y."/>
            <person name="Lin Y.C."/>
            <person name="Chang Y.N."/>
            <person name="Tseng H."/>
            <person name="Huang C.C."/>
            <person name="Liu K.C."/>
            <person name="Huang C.S."/>
            <person name="Su C.W."/>
            <person name="Weng R.R."/>
            <person name="Lee Y.Y."/>
            <person name="Ng W.V."/>
            <person name="Yang C.S."/>
        </authorList>
    </citation>
    <scope>FUNCTION</scope>
    <scope>INDUCTION</scope>
    <scope>INTERACTION WITH XOP2/SRM</scope>
</reference>
<sequence length="184" mass="19903">MSAVTKRSGSYGRTLGVGAVLVLVLATLAVVNVYTNLAPEMSGSQQSMLLSGLVSILLIVAVALLFVATIIGRERTAAVETLAAQARQIEQGELDVDLATNRTDDVGDIYRALAVLRDSEQLDRQHGVSAEVVAQYCETAVEISNGNDDSRLEENVDDPQLAELAMRFNEILDQRKRDAEIDSR</sequence>